<comment type="function">
    <text evidence="3 4 5">Component of the tectonic-like complex, a complex localized at the transition zone of primary cilia and acting as a barrier that prevents diffusion of transmembrane proteins between the cilia and plasma membranes. Required for ciliogenesis and sonic hedgehog/SHH signaling.</text>
</comment>
<comment type="subunit">
    <text evidence="3 4 5">Part of the tectonic-like complex (also named B9 complex).</text>
</comment>
<comment type="interaction">
    <interactant intactId="EBI-5652050">
        <id>Q9R1S0</id>
    </interactant>
    <interactant intactId="EBI-5652008">
        <id>Q3UK10</id>
        <label>B9d2</label>
    </interactant>
    <organismsDiffer>false</organismsDiffer>
    <experiments>5</experiments>
</comment>
<comment type="interaction">
    <interactant intactId="EBI-5652050">
        <id>Q9R1S0</id>
    </interactant>
    <interactant intactId="EBI-4281059">
        <id>Q5SW45</id>
        <label>Mks1</label>
    </interactant>
    <organismsDiffer>false</organismsDiffer>
    <experiments>4</experiments>
</comment>
<comment type="subcellular location">
    <subcellularLocation>
        <location evidence="3 5">Cytoplasm</location>
        <location evidence="3 5">Cytoskeleton</location>
        <location evidence="3 5">Cilium basal body</location>
    </subcellularLocation>
    <text>Localizes at the transition zone, a region between the basal body and the ciliary axoneme.</text>
</comment>
<comment type="developmental stage">
    <text evidence="2">Specifically or prominently expressed in mouse blastocysts compared to 4-cell stage embryos.</text>
</comment>
<comment type="disruption phenotype">
    <text evidence="4 5">Mice display impaired cilia formation associated with renal cystic dysplasia, as well as ductal plate malformation of the liver and polydactyly. Additional phenotypes, occurring at varying frequencies, include randomized heart looping, holoprosencephaly, microphthalmia, cleft palate, ventricular septal defect and thinning of the myocardial wall. Depending on their genetic background, mutant mice die between 14.5 dpc and P1.</text>
</comment>
<comment type="similarity">
    <text evidence="6">Belongs to the B9D family.</text>
</comment>
<gene>
    <name type="primary">B9d1</name>
    <name type="synonym">Eppb9</name>
</gene>
<feature type="chain" id="PRO_0000307668" description="B9 domain-containing protein 1">
    <location>
        <begin position="1"/>
        <end position="204"/>
    </location>
</feature>
<feature type="domain" description="C2 B9-type" evidence="1">
    <location>
        <begin position="9"/>
        <end position="127"/>
    </location>
</feature>
<evidence type="ECO:0000255" key="1">
    <source>
        <dbReference type="PROSITE-ProRule" id="PRU00713"/>
    </source>
</evidence>
<evidence type="ECO:0000269" key="2">
    <source>
    </source>
</evidence>
<evidence type="ECO:0000269" key="3">
    <source>
    </source>
</evidence>
<evidence type="ECO:0000269" key="4">
    <source>
    </source>
</evidence>
<evidence type="ECO:0000269" key="5">
    <source>
    </source>
</evidence>
<evidence type="ECO:0000305" key="6"/>
<keyword id="KW-0966">Cell projection</keyword>
<keyword id="KW-0969">Cilium</keyword>
<keyword id="KW-0970">Cilium biogenesis/degradation</keyword>
<keyword id="KW-0963">Cytoplasm</keyword>
<keyword id="KW-0206">Cytoskeleton</keyword>
<keyword id="KW-1185">Reference proteome</keyword>
<accession>Q9R1S0</accession>
<reference key="1">
    <citation type="submission" date="1999-07" db="EMBL/GenBank/DDBJ databases">
        <title>A protein isolated from endothelial precursor cells.</title>
        <authorList>
            <person name="Miyashita H."/>
            <person name="Sato Y."/>
        </authorList>
    </citation>
    <scope>NUCLEOTIDE SEQUENCE [MRNA]</scope>
    <source>
        <tissue>Endothelial cell</tissue>
    </source>
</reference>
<reference key="2">
    <citation type="journal article" date="2005" name="Science">
        <title>The transcriptional landscape of the mammalian genome.</title>
        <authorList>
            <person name="Carninci P."/>
            <person name="Kasukawa T."/>
            <person name="Katayama S."/>
            <person name="Gough J."/>
            <person name="Frith M.C."/>
            <person name="Maeda N."/>
            <person name="Oyama R."/>
            <person name="Ravasi T."/>
            <person name="Lenhard B."/>
            <person name="Wells C."/>
            <person name="Kodzius R."/>
            <person name="Shimokawa K."/>
            <person name="Bajic V.B."/>
            <person name="Brenner S.E."/>
            <person name="Batalov S."/>
            <person name="Forrest A.R."/>
            <person name="Zavolan M."/>
            <person name="Davis M.J."/>
            <person name="Wilming L.G."/>
            <person name="Aidinis V."/>
            <person name="Allen J.E."/>
            <person name="Ambesi-Impiombato A."/>
            <person name="Apweiler R."/>
            <person name="Aturaliya R.N."/>
            <person name="Bailey T.L."/>
            <person name="Bansal M."/>
            <person name="Baxter L."/>
            <person name="Beisel K.W."/>
            <person name="Bersano T."/>
            <person name="Bono H."/>
            <person name="Chalk A.M."/>
            <person name="Chiu K.P."/>
            <person name="Choudhary V."/>
            <person name="Christoffels A."/>
            <person name="Clutterbuck D.R."/>
            <person name="Crowe M.L."/>
            <person name="Dalla E."/>
            <person name="Dalrymple B.P."/>
            <person name="de Bono B."/>
            <person name="Della Gatta G."/>
            <person name="di Bernardo D."/>
            <person name="Down T."/>
            <person name="Engstrom P."/>
            <person name="Fagiolini M."/>
            <person name="Faulkner G."/>
            <person name="Fletcher C.F."/>
            <person name="Fukushima T."/>
            <person name="Furuno M."/>
            <person name="Futaki S."/>
            <person name="Gariboldi M."/>
            <person name="Georgii-Hemming P."/>
            <person name="Gingeras T.R."/>
            <person name="Gojobori T."/>
            <person name="Green R.E."/>
            <person name="Gustincich S."/>
            <person name="Harbers M."/>
            <person name="Hayashi Y."/>
            <person name="Hensch T.K."/>
            <person name="Hirokawa N."/>
            <person name="Hill D."/>
            <person name="Huminiecki L."/>
            <person name="Iacono M."/>
            <person name="Ikeo K."/>
            <person name="Iwama A."/>
            <person name="Ishikawa T."/>
            <person name="Jakt M."/>
            <person name="Kanapin A."/>
            <person name="Katoh M."/>
            <person name="Kawasawa Y."/>
            <person name="Kelso J."/>
            <person name="Kitamura H."/>
            <person name="Kitano H."/>
            <person name="Kollias G."/>
            <person name="Krishnan S.P."/>
            <person name="Kruger A."/>
            <person name="Kummerfeld S.K."/>
            <person name="Kurochkin I.V."/>
            <person name="Lareau L.F."/>
            <person name="Lazarevic D."/>
            <person name="Lipovich L."/>
            <person name="Liu J."/>
            <person name="Liuni S."/>
            <person name="McWilliam S."/>
            <person name="Madan Babu M."/>
            <person name="Madera M."/>
            <person name="Marchionni L."/>
            <person name="Matsuda H."/>
            <person name="Matsuzawa S."/>
            <person name="Miki H."/>
            <person name="Mignone F."/>
            <person name="Miyake S."/>
            <person name="Morris K."/>
            <person name="Mottagui-Tabar S."/>
            <person name="Mulder N."/>
            <person name="Nakano N."/>
            <person name="Nakauchi H."/>
            <person name="Ng P."/>
            <person name="Nilsson R."/>
            <person name="Nishiguchi S."/>
            <person name="Nishikawa S."/>
            <person name="Nori F."/>
            <person name="Ohara O."/>
            <person name="Okazaki Y."/>
            <person name="Orlando V."/>
            <person name="Pang K.C."/>
            <person name="Pavan W.J."/>
            <person name="Pavesi G."/>
            <person name="Pesole G."/>
            <person name="Petrovsky N."/>
            <person name="Piazza S."/>
            <person name="Reed J."/>
            <person name="Reid J.F."/>
            <person name="Ring B.Z."/>
            <person name="Ringwald M."/>
            <person name="Rost B."/>
            <person name="Ruan Y."/>
            <person name="Salzberg S.L."/>
            <person name="Sandelin A."/>
            <person name="Schneider C."/>
            <person name="Schoenbach C."/>
            <person name="Sekiguchi K."/>
            <person name="Semple C.A."/>
            <person name="Seno S."/>
            <person name="Sessa L."/>
            <person name="Sheng Y."/>
            <person name="Shibata Y."/>
            <person name="Shimada H."/>
            <person name="Shimada K."/>
            <person name="Silva D."/>
            <person name="Sinclair B."/>
            <person name="Sperling S."/>
            <person name="Stupka E."/>
            <person name="Sugiura K."/>
            <person name="Sultana R."/>
            <person name="Takenaka Y."/>
            <person name="Taki K."/>
            <person name="Tammoja K."/>
            <person name="Tan S.L."/>
            <person name="Tang S."/>
            <person name="Taylor M.S."/>
            <person name="Tegner J."/>
            <person name="Teichmann S.A."/>
            <person name="Ueda H.R."/>
            <person name="van Nimwegen E."/>
            <person name="Verardo R."/>
            <person name="Wei C.L."/>
            <person name="Yagi K."/>
            <person name="Yamanishi H."/>
            <person name="Zabarovsky E."/>
            <person name="Zhu S."/>
            <person name="Zimmer A."/>
            <person name="Hide W."/>
            <person name="Bult C."/>
            <person name="Grimmond S.M."/>
            <person name="Teasdale R.D."/>
            <person name="Liu E.T."/>
            <person name="Brusic V."/>
            <person name="Quackenbush J."/>
            <person name="Wahlestedt C."/>
            <person name="Mattick J.S."/>
            <person name="Hume D.A."/>
            <person name="Kai C."/>
            <person name="Sasaki D."/>
            <person name="Tomaru Y."/>
            <person name="Fukuda S."/>
            <person name="Kanamori-Katayama M."/>
            <person name="Suzuki M."/>
            <person name="Aoki J."/>
            <person name="Arakawa T."/>
            <person name="Iida J."/>
            <person name="Imamura K."/>
            <person name="Itoh M."/>
            <person name="Kato T."/>
            <person name="Kawaji H."/>
            <person name="Kawagashira N."/>
            <person name="Kawashima T."/>
            <person name="Kojima M."/>
            <person name="Kondo S."/>
            <person name="Konno H."/>
            <person name="Nakano K."/>
            <person name="Ninomiya N."/>
            <person name="Nishio T."/>
            <person name="Okada M."/>
            <person name="Plessy C."/>
            <person name="Shibata K."/>
            <person name="Shiraki T."/>
            <person name="Suzuki S."/>
            <person name="Tagami M."/>
            <person name="Waki K."/>
            <person name="Watahiki A."/>
            <person name="Okamura-Oho Y."/>
            <person name="Suzuki H."/>
            <person name="Kawai J."/>
            <person name="Hayashizaki Y."/>
        </authorList>
    </citation>
    <scope>NUCLEOTIDE SEQUENCE [LARGE SCALE MRNA]</scope>
    <source>
        <strain>C57BL/6J</strain>
        <tissue>Brain</tissue>
        <tissue>Testis</tissue>
    </source>
</reference>
<reference key="3">
    <citation type="journal article" date="2009" name="PLoS Biol.">
        <title>Lineage-specific biology revealed by a finished genome assembly of the mouse.</title>
        <authorList>
            <person name="Church D.M."/>
            <person name="Goodstadt L."/>
            <person name="Hillier L.W."/>
            <person name="Zody M.C."/>
            <person name="Goldstein S."/>
            <person name="She X."/>
            <person name="Bult C.J."/>
            <person name="Agarwala R."/>
            <person name="Cherry J.L."/>
            <person name="DiCuccio M."/>
            <person name="Hlavina W."/>
            <person name="Kapustin Y."/>
            <person name="Meric P."/>
            <person name="Maglott D."/>
            <person name="Birtle Z."/>
            <person name="Marques A.C."/>
            <person name="Graves T."/>
            <person name="Zhou S."/>
            <person name="Teague B."/>
            <person name="Potamousis K."/>
            <person name="Churas C."/>
            <person name="Place M."/>
            <person name="Herschleb J."/>
            <person name="Runnheim R."/>
            <person name="Forrest D."/>
            <person name="Amos-Landgraf J."/>
            <person name="Schwartz D.C."/>
            <person name="Cheng Z."/>
            <person name="Lindblad-Toh K."/>
            <person name="Eichler E.E."/>
            <person name="Ponting C.P."/>
        </authorList>
    </citation>
    <scope>NUCLEOTIDE SEQUENCE [LARGE SCALE GENOMIC DNA]</scope>
    <source>
        <strain>C57BL/6J</strain>
    </source>
</reference>
<reference key="4">
    <citation type="journal article" date="2004" name="Genome Res.">
        <title>The status, quality, and expansion of the NIH full-length cDNA project: the Mammalian Gene Collection (MGC).</title>
        <authorList>
            <consortium name="The MGC Project Team"/>
        </authorList>
    </citation>
    <scope>NUCLEOTIDE SEQUENCE [LARGE SCALE MRNA]</scope>
    <source>
        <strain>FVB/N</strain>
        <tissue>Mammary tumor</tissue>
    </source>
</reference>
<reference key="5">
    <citation type="journal article" date="2005" name="Mol. Reprod. Dev.">
        <title>Identification of differentially expressed genes in murine embryos at the blastocyst stage using annealing control primer system.</title>
        <authorList>
            <person name="Cui X.S."/>
            <person name="Shin M.R."/>
            <person name="Lee K.A."/>
            <person name="Kim N.H."/>
        </authorList>
    </citation>
    <scope>DEVELOPMENTAL STAGE</scope>
    <source>
        <tissue>Embryo</tissue>
    </source>
</reference>
<reference key="6">
    <citation type="journal article" date="2010" name="Cell">
        <title>A tissue-specific atlas of mouse protein phosphorylation and expression.</title>
        <authorList>
            <person name="Huttlin E.L."/>
            <person name="Jedrychowski M.P."/>
            <person name="Elias J.E."/>
            <person name="Goswami T."/>
            <person name="Rad R."/>
            <person name="Beausoleil S.A."/>
            <person name="Villen J."/>
            <person name="Haas W."/>
            <person name="Sowa M.E."/>
            <person name="Gygi S.P."/>
        </authorList>
    </citation>
    <scope>IDENTIFICATION BY MASS SPECTROMETRY [LARGE SCALE ANALYSIS]</scope>
    <source>
        <tissue>Kidney</tissue>
        <tissue>Testis</tissue>
    </source>
</reference>
<reference key="7">
    <citation type="journal article" date="2011" name="Am. J. Hum. Genet.">
        <title>Disruption of a ciliary B9 protein complex causes Meckel syndrome.</title>
        <authorList>
            <person name="Dowdle W.E."/>
            <person name="Robinson J.F."/>
            <person name="Kneist A."/>
            <person name="Sirerol-Piquer M.S."/>
            <person name="Frints S.G."/>
            <person name="Corbit K.C."/>
            <person name="Zaghloul N.A."/>
            <person name="van Lijnschoten G."/>
            <person name="Mulders L."/>
            <person name="Verver D.E."/>
            <person name="Zerres K."/>
            <person name="Reed R.R."/>
            <person name="Attie-Bitach T."/>
            <person name="Johnson C.A."/>
            <person name="Garcia-Verdugo J.M."/>
            <person name="Katsanis N."/>
            <person name="Bergmann C."/>
            <person name="Reiter J.F."/>
        </authorList>
    </citation>
    <scope>FUNCTION</scope>
    <scope>DISRUPTION PHENOTYPE</scope>
    <scope>IDENTIFICATION IN A COMPLEX WITH MKS1 AND B9D2</scope>
</reference>
<reference key="8">
    <citation type="journal article" date="2011" name="Am. J. Hum. Genet.">
        <authorList>
            <person name="Dowdle W.E."/>
            <person name="Robinson J.F."/>
            <person name="Kneist A."/>
            <person name="Sirerol-Piquer M.S."/>
            <person name="Frints S.G."/>
            <person name="Corbit K.C."/>
            <person name="Zaghloul N.A."/>
            <person name="van Lijnschoten G."/>
            <person name="Mulders L."/>
            <person name="Verver D.E."/>
            <person name="Zerres K."/>
            <person name="Reed R.R."/>
            <person name="Attie-Bitach T."/>
            <person name="Johnson C.A."/>
            <person name="Garcia-Verdugo J.M."/>
            <person name="Katsanis N."/>
            <person name="Bergmann C."/>
            <person name="Reiter J.F."/>
        </authorList>
    </citation>
    <scope>ERRATUM OF PUBMED:21763481</scope>
</reference>
<reference key="9">
    <citation type="journal article" date="2011" name="Cell">
        <title>Mapping the NPHP-JBTS-MKS protein network reveals ciliopathy disease genes and pathways.</title>
        <authorList>
            <person name="Sang L."/>
            <person name="Miller J.J."/>
            <person name="Corbit K.C."/>
            <person name="Giles R.H."/>
            <person name="Brauer M.J."/>
            <person name="Otto E.A."/>
            <person name="Baye L.M."/>
            <person name="Wen X."/>
            <person name="Scales S.J."/>
            <person name="Kwong M."/>
            <person name="Huntzicker E.G."/>
            <person name="Sfakianos M.K."/>
            <person name="Sandoval W."/>
            <person name="Bazan J.F."/>
            <person name="Kulkarni P."/>
            <person name="Garcia-Gonzalo F.R."/>
            <person name="Seol A.D."/>
            <person name="O'Toole J.F."/>
            <person name="Held S."/>
            <person name="Reutter H.M."/>
            <person name="Lane W.S."/>
            <person name="Rafiq M.A."/>
            <person name="Noor A."/>
            <person name="Ansar M."/>
            <person name="Devi A.R."/>
            <person name="Sheffield V.C."/>
            <person name="Slusarski D.C."/>
            <person name="Vincent J.B."/>
            <person name="Doherty D.A."/>
            <person name="Hildebrandt F."/>
            <person name="Reiter J.F."/>
            <person name="Jackson P.K."/>
        </authorList>
    </citation>
    <scope>INTERACTION WITH MKS1</scope>
</reference>
<reference key="10">
    <citation type="journal article" date="2012" name="Nat. Cell Biol.">
        <title>A ciliopathy complex at the transition zone protects the cilia as a privileged membrane domain.</title>
        <authorList>
            <person name="Chih B."/>
            <person name="Liu P."/>
            <person name="Chinn Y."/>
            <person name="Chalouni C."/>
            <person name="Komuves L.G."/>
            <person name="Hass P.E."/>
            <person name="Sandoval W."/>
            <person name="Peterson A.S."/>
        </authorList>
    </citation>
    <scope>IDENTIFICATION IN THE TECTONIC-LIKE COMPLEX</scope>
    <scope>FUNCTION</scope>
    <scope>SUBCELLULAR LOCATION</scope>
    <scope>DISRUPTION PHENOTYPE</scope>
</reference>
<reference key="11">
    <citation type="journal article" date="2011" name="Nat. Genet.">
        <title>A transition zone complex regulates mammalian ciliogenesis and ciliary membrane composition.</title>
        <authorList>
            <person name="Garcia-Gonzalo F.R."/>
            <person name="Corbit K.C."/>
            <person name="Sirerol-Piquer M.S."/>
            <person name="Ramaswami G."/>
            <person name="Otto E.A."/>
            <person name="Noriega T.R."/>
            <person name="Seol A.D."/>
            <person name="Robinson J.F."/>
            <person name="Bennett C.L."/>
            <person name="Josifova D.J."/>
            <person name="Garcia-Verdugo J.M."/>
            <person name="Katsanis N."/>
            <person name="Hildebrandt F."/>
            <person name="Reiter J.F."/>
        </authorList>
    </citation>
    <scope>FUNCTION</scope>
    <scope>SUBCELLULAR LOCATION</scope>
    <scope>IDENTIFICATION IN THE TECTONIC-LIKE COMPLEX</scope>
</reference>
<proteinExistence type="evidence at protein level"/>
<dbReference type="EMBL" id="AB030483">
    <property type="protein sequence ID" value="BAA82643.1"/>
    <property type="molecule type" value="mRNA"/>
</dbReference>
<dbReference type="EMBL" id="AK003038">
    <property type="protein sequence ID" value="BAB22525.1"/>
    <property type="molecule type" value="mRNA"/>
</dbReference>
<dbReference type="EMBL" id="AK010355">
    <property type="protein sequence ID" value="BAB26875.1"/>
    <property type="molecule type" value="mRNA"/>
</dbReference>
<dbReference type="EMBL" id="AK131701">
    <property type="protein sequence ID" value="BAE20767.1"/>
    <property type="molecule type" value="mRNA"/>
</dbReference>
<dbReference type="EMBL" id="AL604029">
    <property type="status" value="NOT_ANNOTATED_CDS"/>
    <property type="molecule type" value="Genomic_DNA"/>
</dbReference>
<dbReference type="EMBL" id="BC008113">
    <property type="protein sequence ID" value="AAH08113.1"/>
    <property type="molecule type" value="mRNA"/>
</dbReference>
<dbReference type="CCDS" id="CCDS24815.1"/>
<dbReference type="RefSeq" id="NP_001317709.1">
    <property type="nucleotide sequence ID" value="NM_001330780.1"/>
</dbReference>
<dbReference type="RefSeq" id="NP_001317710.1">
    <property type="nucleotide sequence ID" value="NM_001330781.1"/>
</dbReference>
<dbReference type="RefSeq" id="NP_038745.1">
    <property type="nucleotide sequence ID" value="NM_013717.3"/>
</dbReference>
<dbReference type="BioGRID" id="205118">
    <property type="interactions" value="2"/>
</dbReference>
<dbReference type="CORUM" id="Q9R1S0"/>
<dbReference type="FunCoup" id="Q9R1S0">
    <property type="interactions" value="346"/>
</dbReference>
<dbReference type="IntAct" id="Q9R1S0">
    <property type="interactions" value="79"/>
</dbReference>
<dbReference type="STRING" id="10090.ENSMUSP00000099717"/>
<dbReference type="iPTMnet" id="Q9R1S0"/>
<dbReference type="PhosphoSitePlus" id="Q9R1S0"/>
<dbReference type="PaxDb" id="10090-ENSMUSP00000099717"/>
<dbReference type="ProteomicsDB" id="277155"/>
<dbReference type="Pumba" id="Q9R1S0"/>
<dbReference type="Antibodypedia" id="13647">
    <property type="antibodies" value="79 antibodies from 22 providers"/>
</dbReference>
<dbReference type="DNASU" id="27078"/>
<dbReference type="Ensembl" id="ENSMUST00000102657.10">
    <property type="protein sequence ID" value="ENSMUSP00000099717.4"/>
    <property type="gene ID" value="ENSMUSG00000001039.13"/>
</dbReference>
<dbReference type="GeneID" id="27078"/>
<dbReference type="KEGG" id="mmu:27078"/>
<dbReference type="UCSC" id="uc007jhu.1">
    <property type="organism name" value="mouse"/>
</dbReference>
<dbReference type="AGR" id="MGI:1351471"/>
<dbReference type="CTD" id="27077"/>
<dbReference type="MGI" id="MGI:1351471">
    <property type="gene designation" value="B9d1"/>
</dbReference>
<dbReference type="VEuPathDB" id="HostDB:ENSMUSG00000001039"/>
<dbReference type="eggNOG" id="KOG4027">
    <property type="taxonomic scope" value="Eukaryota"/>
</dbReference>
<dbReference type="GeneTree" id="ENSGT00940000160079"/>
<dbReference type="HOGENOM" id="CLU_084934_0_0_1"/>
<dbReference type="InParanoid" id="Q9R1S0"/>
<dbReference type="OMA" id="NMPIEVT"/>
<dbReference type="OrthoDB" id="431939at2759"/>
<dbReference type="PhylomeDB" id="Q9R1S0"/>
<dbReference type="TreeFam" id="TF314883"/>
<dbReference type="Reactome" id="R-MMU-5620912">
    <property type="pathway name" value="Anchoring of the basal body to the plasma membrane"/>
</dbReference>
<dbReference type="BioGRID-ORCS" id="27078">
    <property type="hits" value="6 hits in 78 CRISPR screens"/>
</dbReference>
<dbReference type="ChiTaRS" id="B9d1">
    <property type="organism name" value="mouse"/>
</dbReference>
<dbReference type="PRO" id="PR:Q9R1S0"/>
<dbReference type="Proteomes" id="UP000000589">
    <property type="component" value="Chromosome 11"/>
</dbReference>
<dbReference type="RNAct" id="Q9R1S0">
    <property type="molecule type" value="protein"/>
</dbReference>
<dbReference type="Bgee" id="ENSMUSG00000001039">
    <property type="expression patterns" value="Expressed in animal zygote and 209 other cell types or tissues"/>
</dbReference>
<dbReference type="ExpressionAtlas" id="Q9R1S0">
    <property type="expression patterns" value="baseline and differential"/>
</dbReference>
<dbReference type="GO" id="GO:0005813">
    <property type="term" value="C:centrosome"/>
    <property type="evidence" value="ECO:0000250"/>
    <property type="project" value="UniProtKB"/>
</dbReference>
<dbReference type="GO" id="GO:0036064">
    <property type="term" value="C:ciliary basal body"/>
    <property type="evidence" value="ECO:0000250"/>
    <property type="project" value="UniProtKB"/>
</dbReference>
<dbReference type="GO" id="GO:0035869">
    <property type="term" value="C:ciliary transition zone"/>
    <property type="evidence" value="ECO:0000314"/>
    <property type="project" value="UniProtKB"/>
</dbReference>
<dbReference type="GO" id="GO:0005737">
    <property type="term" value="C:cytoplasm"/>
    <property type="evidence" value="ECO:0007669"/>
    <property type="project" value="UniProtKB-KW"/>
</dbReference>
<dbReference type="GO" id="GO:0016020">
    <property type="term" value="C:membrane"/>
    <property type="evidence" value="ECO:0000314"/>
    <property type="project" value="MGI"/>
</dbReference>
<dbReference type="GO" id="GO:0036038">
    <property type="term" value="C:MKS complex"/>
    <property type="evidence" value="ECO:0000314"/>
    <property type="project" value="UniProtKB"/>
</dbReference>
<dbReference type="GO" id="GO:0008158">
    <property type="term" value="F:hedgehog receptor activity"/>
    <property type="evidence" value="ECO:0000315"/>
    <property type="project" value="UniProtKB"/>
</dbReference>
<dbReference type="GO" id="GO:0043010">
    <property type="term" value="P:camera-type eye development"/>
    <property type="evidence" value="ECO:0000315"/>
    <property type="project" value="MGI"/>
</dbReference>
<dbReference type="GO" id="GO:0060271">
    <property type="term" value="P:cilium assembly"/>
    <property type="evidence" value="ECO:0000315"/>
    <property type="project" value="UniProtKB"/>
</dbReference>
<dbReference type="GO" id="GO:0042733">
    <property type="term" value="P:embryonic digit morphogenesis"/>
    <property type="evidence" value="ECO:0000315"/>
    <property type="project" value="MGI"/>
</dbReference>
<dbReference type="GO" id="GO:0001701">
    <property type="term" value="P:in utero embryonic development"/>
    <property type="evidence" value="ECO:0000315"/>
    <property type="project" value="MGI"/>
</dbReference>
<dbReference type="GO" id="GO:0060563">
    <property type="term" value="P:neuroepithelial cell differentiation"/>
    <property type="evidence" value="ECO:0000315"/>
    <property type="project" value="MGI"/>
</dbReference>
<dbReference type="GO" id="GO:0032880">
    <property type="term" value="P:regulation of protein localization"/>
    <property type="evidence" value="ECO:0000315"/>
    <property type="project" value="MGI"/>
</dbReference>
<dbReference type="GO" id="GO:0007224">
    <property type="term" value="P:smoothened signaling pathway"/>
    <property type="evidence" value="ECO:0000315"/>
    <property type="project" value="UniProtKB"/>
</dbReference>
<dbReference type="GO" id="GO:0001944">
    <property type="term" value="P:vasculature development"/>
    <property type="evidence" value="ECO:0000315"/>
    <property type="project" value="MGI"/>
</dbReference>
<dbReference type="InterPro" id="IPR010796">
    <property type="entry name" value="C2_B9-type_dom"/>
</dbReference>
<dbReference type="PANTHER" id="PTHR12968">
    <property type="entry name" value="B9 DOMAIN-CONTAINING"/>
    <property type="match status" value="1"/>
</dbReference>
<dbReference type="PANTHER" id="PTHR12968:SF1">
    <property type="entry name" value="B9 DOMAIN-CONTAINING PROTEIN 1"/>
    <property type="match status" value="1"/>
</dbReference>
<dbReference type="Pfam" id="PF07162">
    <property type="entry name" value="B9-C2"/>
    <property type="match status" value="1"/>
</dbReference>
<dbReference type="PROSITE" id="PS51381">
    <property type="entry name" value="C2_B9"/>
    <property type="match status" value="1"/>
</dbReference>
<name>B9D1_MOUSE</name>
<sequence>MAAASPSVFLLMITGQVESAQFPEYDDLYCKYCFVYGQDWAPTAGLEEGISQIASKSQDVRQALVWNFPIDVTFKSTNPYGWPQIVLSVYGPDVFGNDVVRGYGAVHVPLSPGRHKRTIPMFVPESTSTLQKFTSWFMGRRPEYTDPKVVAQGEGREVTRVRSQGFVTLLFNVVTKDMKKLGYDTGPVDTQGVLGPSLPQGNPQ</sequence>
<protein>
    <recommendedName>
        <fullName>B9 domain-containing protein 1</fullName>
    </recommendedName>
    <alternativeName>
        <fullName>Endothelial precursor cells protein B9</fullName>
    </alternativeName>
</protein>
<organism>
    <name type="scientific">Mus musculus</name>
    <name type="common">Mouse</name>
    <dbReference type="NCBI Taxonomy" id="10090"/>
    <lineage>
        <taxon>Eukaryota</taxon>
        <taxon>Metazoa</taxon>
        <taxon>Chordata</taxon>
        <taxon>Craniata</taxon>
        <taxon>Vertebrata</taxon>
        <taxon>Euteleostomi</taxon>
        <taxon>Mammalia</taxon>
        <taxon>Eutheria</taxon>
        <taxon>Euarchontoglires</taxon>
        <taxon>Glires</taxon>
        <taxon>Rodentia</taxon>
        <taxon>Myomorpha</taxon>
        <taxon>Muroidea</taxon>
        <taxon>Muridae</taxon>
        <taxon>Murinae</taxon>
        <taxon>Mus</taxon>
        <taxon>Mus</taxon>
    </lineage>
</organism>